<evidence type="ECO:0000255" key="1">
    <source>
        <dbReference type="HAMAP-Rule" id="MF_00057"/>
    </source>
</evidence>
<feature type="chain" id="PRO_1000091871" description="3-deoxy-manno-octulosonate cytidylyltransferase">
    <location>
        <begin position="1"/>
        <end position="245"/>
    </location>
</feature>
<comment type="function">
    <text evidence="1">Activates KDO (a required 8-carbon sugar) for incorporation into bacterial lipopolysaccharide in Gram-negative bacteria.</text>
</comment>
<comment type="catalytic activity">
    <reaction evidence="1">
        <text>3-deoxy-alpha-D-manno-oct-2-ulosonate + CTP = CMP-3-deoxy-beta-D-manno-octulosonate + diphosphate</text>
        <dbReference type="Rhea" id="RHEA:23448"/>
        <dbReference type="ChEBI" id="CHEBI:33019"/>
        <dbReference type="ChEBI" id="CHEBI:37563"/>
        <dbReference type="ChEBI" id="CHEBI:85986"/>
        <dbReference type="ChEBI" id="CHEBI:85987"/>
        <dbReference type="EC" id="2.7.7.38"/>
    </reaction>
</comment>
<comment type="pathway">
    <text evidence="1">Nucleotide-sugar biosynthesis; CMP-3-deoxy-D-manno-octulosonate biosynthesis; CMP-3-deoxy-D-manno-octulosonate from 3-deoxy-D-manno-octulosonate and CTP: step 1/1.</text>
</comment>
<comment type="pathway">
    <text evidence="1">Bacterial outer membrane biogenesis; lipopolysaccharide biosynthesis.</text>
</comment>
<comment type="subcellular location">
    <subcellularLocation>
        <location evidence="1">Cytoplasm</location>
    </subcellularLocation>
</comment>
<comment type="similarity">
    <text evidence="1">Belongs to the KdsB family.</text>
</comment>
<dbReference type="EC" id="2.7.7.38" evidence="1"/>
<dbReference type="EMBL" id="CP001055">
    <property type="protein sequence ID" value="ACC98458.1"/>
    <property type="molecule type" value="Genomic_DNA"/>
</dbReference>
<dbReference type="RefSeq" id="WP_012415073.1">
    <property type="nucleotide sequence ID" value="NC_010644.1"/>
</dbReference>
<dbReference type="SMR" id="B2KD62"/>
<dbReference type="STRING" id="445932.Emin_0903"/>
<dbReference type="KEGG" id="emi:Emin_0903"/>
<dbReference type="HOGENOM" id="CLU_065038_0_1_0"/>
<dbReference type="OrthoDB" id="9815559at2"/>
<dbReference type="UniPathway" id="UPA00030"/>
<dbReference type="UniPathway" id="UPA00358">
    <property type="reaction ID" value="UER00476"/>
</dbReference>
<dbReference type="Proteomes" id="UP000001029">
    <property type="component" value="Chromosome"/>
</dbReference>
<dbReference type="GO" id="GO:0005829">
    <property type="term" value="C:cytosol"/>
    <property type="evidence" value="ECO:0007669"/>
    <property type="project" value="TreeGrafter"/>
</dbReference>
<dbReference type="GO" id="GO:0008690">
    <property type="term" value="F:3-deoxy-manno-octulosonate cytidylyltransferase activity"/>
    <property type="evidence" value="ECO:0007669"/>
    <property type="project" value="UniProtKB-UniRule"/>
</dbReference>
<dbReference type="GO" id="GO:0033468">
    <property type="term" value="P:CMP-keto-3-deoxy-D-manno-octulosonic acid biosynthetic process"/>
    <property type="evidence" value="ECO:0007669"/>
    <property type="project" value="UniProtKB-UniRule"/>
</dbReference>
<dbReference type="GO" id="GO:0009103">
    <property type="term" value="P:lipopolysaccharide biosynthetic process"/>
    <property type="evidence" value="ECO:0007669"/>
    <property type="project" value="UniProtKB-UniRule"/>
</dbReference>
<dbReference type="CDD" id="cd02517">
    <property type="entry name" value="CMP-KDO-Synthetase"/>
    <property type="match status" value="1"/>
</dbReference>
<dbReference type="Gene3D" id="3.90.550.10">
    <property type="entry name" value="Spore Coat Polysaccharide Biosynthesis Protein SpsA, Chain A"/>
    <property type="match status" value="1"/>
</dbReference>
<dbReference type="HAMAP" id="MF_00057">
    <property type="entry name" value="KdsB"/>
    <property type="match status" value="1"/>
</dbReference>
<dbReference type="InterPro" id="IPR003329">
    <property type="entry name" value="Cytidylyl_trans"/>
</dbReference>
<dbReference type="InterPro" id="IPR004528">
    <property type="entry name" value="KdsB"/>
</dbReference>
<dbReference type="InterPro" id="IPR029044">
    <property type="entry name" value="Nucleotide-diphossugar_trans"/>
</dbReference>
<dbReference type="NCBIfam" id="TIGR00466">
    <property type="entry name" value="kdsB"/>
    <property type="match status" value="1"/>
</dbReference>
<dbReference type="NCBIfam" id="NF003950">
    <property type="entry name" value="PRK05450.1-3"/>
    <property type="match status" value="1"/>
</dbReference>
<dbReference type="NCBIfam" id="NF003952">
    <property type="entry name" value="PRK05450.1-5"/>
    <property type="match status" value="1"/>
</dbReference>
<dbReference type="NCBIfam" id="NF009905">
    <property type="entry name" value="PRK13368.1"/>
    <property type="match status" value="1"/>
</dbReference>
<dbReference type="PANTHER" id="PTHR42866">
    <property type="entry name" value="3-DEOXY-MANNO-OCTULOSONATE CYTIDYLYLTRANSFERASE"/>
    <property type="match status" value="1"/>
</dbReference>
<dbReference type="PANTHER" id="PTHR42866:SF2">
    <property type="entry name" value="3-DEOXY-MANNO-OCTULOSONATE CYTIDYLYLTRANSFERASE, MITOCHONDRIAL"/>
    <property type="match status" value="1"/>
</dbReference>
<dbReference type="Pfam" id="PF02348">
    <property type="entry name" value="CTP_transf_3"/>
    <property type="match status" value="1"/>
</dbReference>
<dbReference type="SUPFAM" id="SSF53448">
    <property type="entry name" value="Nucleotide-diphospho-sugar transferases"/>
    <property type="match status" value="1"/>
</dbReference>
<protein>
    <recommendedName>
        <fullName evidence="1">3-deoxy-manno-octulosonate cytidylyltransferase</fullName>
        <ecNumber evidence="1">2.7.7.38</ecNumber>
    </recommendedName>
    <alternativeName>
        <fullName evidence="1">CMP-2-keto-3-deoxyoctulosonic acid synthase</fullName>
        <shortName evidence="1">CKS</shortName>
        <shortName evidence="1">CMP-KDO synthase</shortName>
    </alternativeName>
</protein>
<reference key="1">
    <citation type="journal article" date="2009" name="Appl. Environ. Microbiol.">
        <title>Genomic analysis of 'Elusimicrobium minutum,' the first cultivated representative of the phylum 'Elusimicrobia' (formerly termite group 1).</title>
        <authorList>
            <person name="Herlemann D.P.R."/>
            <person name="Geissinger O."/>
            <person name="Ikeda-Ohtsubo W."/>
            <person name="Kunin V."/>
            <person name="Sun H."/>
            <person name="Lapidus A."/>
            <person name="Hugenholtz P."/>
            <person name="Brune A."/>
        </authorList>
    </citation>
    <scope>NUCLEOTIDE SEQUENCE [LARGE SCALE GENOMIC DNA]</scope>
    <source>
        <strain>Pei191</strain>
    </source>
</reference>
<proteinExistence type="inferred from homology"/>
<accession>B2KD62</accession>
<sequence>MGDTIIVIPARYGSTRLKAKVLEQLDGKSIVEHVWRAAKAAGEGKVLIATESPVIVEHCAKFGAQAVLTSEACQSGTDRIYEAVKNGSEDYVLNLQGDEPFVKPQTIKGVIKLLKKDSKIDIATACYPTFNDDIYKNPNAVKAVLTKDMRALYFSRSAIPYKRELTEETKKAPYYIHCGIYGYKKTALERFVNLPPSNLEKLEKLEQLRALEDGMVIKSILIEAAGPAIDTAEDLNEARKYIRNN</sequence>
<name>KDSB_ELUMP</name>
<gene>
    <name evidence="1" type="primary">kdsB</name>
    <name type="ordered locus">Emin_0903</name>
</gene>
<keyword id="KW-0963">Cytoplasm</keyword>
<keyword id="KW-0448">Lipopolysaccharide biosynthesis</keyword>
<keyword id="KW-0548">Nucleotidyltransferase</keyword>
<keyword id="KW-1185">Reference proteome</keyword>
<keyword id="KW-0808">Transferase</keyword>
<organism>
    <name type="scientific">Elusimicrobium minutum (strain Pei191)</name>
    <dbReference type="NCBI Taxonomy" id="445932"/>
    <lineage>
        <taxon>Bacteria</taxon>
        <taxon>Pseudomonadati</taxon>
        <taxon>Elusimicrobiota</taxon>
        <taxon>Elusimicrobia</taxon>
        <taxon>Elusimicrobiales</taxon>
        <taxon>Elusimicrobiaceae</taxon>
        <taxon>Elusimicrobium</taxon>
    </lineage>
</organism>